<reference key="1">
    <citation type="journal article" date="2009" name="J. Bacteriol.">
        <title>Genome sequences of three Agrobacterium biovars help elucidate the evolution of multichromosome genomes in bacteria.</title>
        <authorList>
            <person name="Slater S.C."/>
            <person name="Goldman B.S."/>
            <person name="Goodner B."/>
            <person name="Setubal J.C."/>
            <person name="Farrand S.K."/>
            <person name="Nester E.W."/>
            <person name="Burr T.J."/>
            <person name="Banta L."/>
            <person name="Dickerman A.W."/>
            <person name="Paulsen I."/>
            <person name="Otten L."/>
            <person name="Suen G."/>
            <person name="Welch R."/>
            <person name="Almeida N.F."/>
            <person name="Arnold F."/>
            <person name="Burton O.T."/>
            <person name="Du Z."/>
            <person name="Ewing A."/>
            <person name="Godsy E."/>
            <person name="Heisel S."/>
            <person name="Houmiel K.L."/>
            <person name="Jhaveri J."/>
            <person name="Lu J."/>
            <person name="Miller N.M."/>
            <person name="Norton S."/>
            <person name="Chen Q."/>
            <person name="Phoolcharoen W."/>
            <person name="Ohlin V."/>
            <person name="Ondrusek D."/>
            <person name="Pride N."/>
            <person name="Stricklin S.L."/>
            <person name="Sun J."/>
            <person name="Wheeler C."/>
            <person name="Wilson L."/>
            <person name="Zhu H."/>
            <person name="Wood D.W."/>
        </authorList>
    </citation>
    <scope>NUCLEOTIDE SEQUENCE [LARGE SCALE GENOMIC DNA]</scope>
    <source>
        <strain>K84 / ATCC BAA-868</strain>
    </source>
</reference>
<reference key="2">
    <citation type="journal article" date="2018" name="Nat. Chem. Biol.">
        <title>Functional assignment of multiple catabolic pathways for D-apiose.</title>
        <authorList>
            <person name="Carter M.S."/>
            <person name="Zhang X."/>
            <person name="Huang H."/>
            <person name="Bouvier J.T."/>
            <person name="Francisco B.S."/>
            <person name="Vetting M.W."/>
            <person name="Al-Obaidi N."/>
            <person name="Bonanno J.B."/>
            <person name="Ghosh A."/>
            <person name="Zallot R.G."/>
            <person name="Andersen H.M."/>
            <person name="Almo S.C."/>
            <person name="Gerlt J.A."/>
        </authorList>
    </citation>
    <scope>FUNCTION</scope>
    <scope>CATALYTIC ACTIVITY</scope>
    <scope>BIOPHYSICOCHEMICAL PROPERTIES</scope>
    <scope>PATHWAY</scope>
</reference>
<reference evidence="7 8 9 10 11" key="3">
    <citation type="submission" date="2017-01" db="PDB data bank">
        <authorList>
            <person name="Cook W.J."/>
            <person name="Bonanno J.B."/>
            <person name="Fedorov E."/>
            <person name="Huang H."/>
            <person name="Gerlt J.A."/>
            <person name="Almo S.C."/>
        </authorList>
    </citation>
    <scope>X-RAY CRYSTALLOGRAPHY (1.92 ANGSTROMS) IN COMPLEXES WITH MAGNESIUM; NAD AND SUBSTRATE ANALOGS</scope>
</reference>
<keyword id="KW-0002">3D-structure</keyword>
<keyword id="KW-0119">Carbohydrate metabolism</keyword>
<keyword id="KW-0460">Magnesium</keyword>
<keyword id="KW-0479">Metal-binding</keyword>
<keyword id="KW-0520">NAD</keyword>
<keyword id="KW-0547">Nucleotide-binding</keyword>
<keyword id="KW-0560">Oxidoreductase</keyword>
<name>APSD_RHIR8</name>
<organism>
    <name type="scientific">Rhizobium rhizogenes (strain K84 / ATCC BAA-868)</name>
    <name type="common">Agrobacterium radiobacter</name>
    <dbReference type="NCBI Taxonomy" id="311403"/>
    <lineage>
        <taxon>Bacteria</taxon>
        <taxon>Pseudomonadati</taxon>
        <taxon>Pseudomonadota</taxon>
        <taxon>Alphaproteobacteria</taxon>
        <taxon>Hyphomicrobiales</taxon>
        <taxon>Rhizobiaceae</taxon>
        <taxon>Rhizobium/Agrobacterium group</taxon>
        <taxon>Rhizobium</taxon>
    </lineage>
</organism>
<proteinExistence type="evidence at protein level"/>
<protein>
    <recommendedName>
        <fullName evidence="3">D-apiose dehydrogenase</fullName>
        <ecNumber evidence="1">1.1.1.420</ecNumber>
    </recommendedName>
</protein>
<accession>B9JK80</accession>
<evidence type="ECO:0000269" key="1">
    <source>
    </source>
</evidence>
<evidence type="ECO:0000269" key="2">
    <source ref="3"/>
</evidence>
<evidence type="ECO:0000303" key="3">
    <source>
    </source>
</evidence>
<evidence type="ECO:0000305" key="4"/>
<evidence type="ECO:0000305" key="5">
    <source ref="3"/>
</evidence>
<evidence type="ECO:0000312" key="6">
    <source>
        <dbReference type="EMBL" id="ACM30322.1"/>
    </source>
</evidence>
<evidence type="ECO:0007744" key="7">
    <source>
        <dbReference type="PDB" id="5UHW"/>
    </source>
</evidence>
<evidence type="ECO:0007744" key="8">
    <source>
        <dbReference type="PDB" id="5UHZ"/>
    </source>
</evidence>
<evidence type="ECO:0007744" key="9">
    <source>
        <dbReference type="PDB" id="5UI9"/>
    </source>
</evidence>
<evidence type="ECO:0007744" key="10">
    <source>
        <dbReference type="PDB" id="5UIA"/>
    </source>
</evidence>
<evidence type="ECO:0007744" key="11">
    <source>
        <dbReference type="PDB" id="5UIB"/>
    </source>
</evidence>
<evidence type="ECO:0007829" key="12">
    <source>
        <dbReference type="PDB" id="5UI9"/>
    </source>
</evidence>
<evidence type="ECO:0007829" key="13">
    <source>
        <dbReference type="PDB" id="5UIA"/>
    </source>
</evidence>
<evidence type="ECO:0007829" key="14">
    <source>
        <dbReference type="PDB" id="5UIB"/>
    </source>
</evidence>
<comment type="function">
    <text evidence="1">Involved in catabolism of D-apiose. Catalyzes oxidation of D-apiose to D-apionolactone.</text>
</comment>
<comment type="catalytic activity">
    <reaction evidence="1">
        <text>D-apiofuranose + NAD(+) = D-apionolactone + NADH + H(+)</text>
        <dbReference type="Rhea" id="RHEA:57056"/>
        <dbReference type="ChEBI" id="CHEBI:15378"/>
        <dbReference type="ChEBI" id="CHEBI:57540"/>
        <dbReference type="ChEBI" id="CHEBI:57945"/>
        <dbReference type="ChEBI" id="CHEBI:141215"/>
        <dbReference type="ChEBI" id="CHEBI:141216"/>
        <dbReference type="EC" id="1.1.1.420"/>
    </reaction>
</comment>
<comment type="biophysicochemical properties">
    <kinetics>
        <KM evidence="1">0.078 mM for D-apiose</KM>
        <text evidence="1">kcat is 53 sec(-1).</text>
    </kinetics>
</comment>
<comment type="pathway">
    <text evidence="1">Carbohydrate metabolism.</text>
</comment>
<comment type="similarity">
    <text evidence="4">Belongs to the Gfo/Idh/MocA family.</text>
</comment>
<dbReference type="EC" id="1.1.1.420" evidence="1"/>
<dbReference type="EMBL" id="CP000629">
    <property type="protein sequence ID" value="ACM30322.1"/>
    <property type="molecule type" value="Genomic_DNA"/>
</dbReference>
<dbReference type="PDB" id="5UHW">
    <property type="method" value="X-ray"/>
    <property type="resolution" value="2.24 A"/>
    <property type="chains" value="A/B=1-345"/>
</dbReference>
<dbReference type="PDB" id="5UHZ">
    <property type="method" value="X-ray"/>
    <property type="resolution" value="2.20 A"/>
    <property type="chains" value="A/B=1-345"/>
</dbReference>
<dbReference type="PDB" id="5UI9">
    <property type="method" value="X-ray"/>
    <property type="resolution" value="1.92 A"/>
    <property type="chains" value="A/B=1-345"/>
</dbReference>
<dbReference type="PDB" id="5UIA">
    <property type="method" value="X-ray"/>
    <property type="resolution" value="2.18 A"/>
    <property type="chains" value="A/B=1-345"/>
</dbReference>
<dbReference type="PDB" id="5UIB">
    <property type="method" value="X-ray"/>
    <property type="resolution" value="2.65 A"/>
    <property type="chains" value="A/B=1-345"/>
</dbReference>
<dbReference type="PDBsum" id="5UHW"/>
<dbReference type="PDBsum" id="5UHZ"/>
<dbReference type="PDBsum" id="5UI9"/>
<dbReference type="PDBsum" id="5UIA"/>
<dbReference type="PDBsum" id="5UIB"/>
<dbReference type="SMR" id="B9JK80"/>
<dbReference type="STRING" id="311403.Arad_9238"/>
<dbReference type="KEGG" id="ara:Arad_9238"/>
<dbReference type="eggNOG" id="COG0673">
    <property type="taxonomic scope" value="Bacteria"/>
</dbReference>
<dbReference type="HOGENOM" id="CLU_023194_1_4_5"/>
<dbReference type="BioCyc" id="MetaCyc:MONOMER-20958"/>
<dbReference type="BRENDA" id="1.1.1.420">
    <property type="organism ID" value="200"/>
</dbReference>
<dbReference type="SABIO-RK" id="B9JK80"/>
<dbReference type="Proteomes" id="UP000001600">
    <property type="component" value="Chromosome 2"/>
</dbReference>
<dbReference type="GO" id="GO:0046872">
    <property type="term" value="F:metal ion binding"/>
    <property type="evidence" value="ECO:0007669"/>
    <property type="project" value="UniProtKB-KW"/>
</dbReference>
<dbReference type="GO" id="GO:0000166">
    <property type="term" value="F:nucleotide binding"/>
    <property type="evidence" value="ECO:0007669"/>
    <property type="project" value="UniProtKB-KW"/>
</dbReference>
<dbReference type="GO" id="GO:0016491">
    <property type="term" value="F:oxidoreductase activity"/>
    <property type="evidence" value="ECO:0007669"/>
    <property type="project" value="UniProtKB-KW"/>
</dbReference>
<dbReference type="Gene3D" id="3.30.360.10">
    <property type="entry name" value="Dihydrodipicolinate Reductase, domain 2"/>
    <property type="match status" value="1"/>
</dbReference>
<dbReference type="Gene3D" id="3.40.50.720">
    <property type="entry name" value="NAD(P)-binding Rossmann-like Domain"/>
    <property type="match status" value="1"/>
</dbReference>
<dbReference type="InterPro" id="IPR000683">
    <property type="entry name" value="Gfo/Idh/MocA-like_OxRdtase_N"/>
</dbReference>
<dbReference type="InterPro" id="IPR051317">
    <property type="entry name" value="Gfo/Idh/MocA_oxidoreduct"/>
</dbReference>
<dbReference type="InterPro" id="IPR055170">
    <property type="entry name" value="GFO_IDH_MocA-like_dom"/>
</dbReference>
<dbReference type="InterPro" id="IPR036291">
    <property type="entry name" value="NAD(P)-bd_dom_sf"/>
</dbReference>
<dbReference type="PANTHER" id="PTHR43708">
    <property type="entry name" value="CONSERVED EXPRESSED OXIDOREDUCTASE (EUROFUNG)"/>
    <property type="match status" value="1"/>
</dbReference>
<dbReference type="PANTHER" id="PTHR43708:SF8">
    <property type="entry name" value="OXIDOREDUCTASE"/>
    <property type="match status" value="1"/>
</dbReference>
<dbReference type="Pfam" id="PF01408">
    <property type="entry name" value="GFO_IDH_MocA"/>
    <property type="match status" value="1"/>
</dbReference>
<dbReference type="Pfam" id="PF22725">
    <property type="entry name" value="GFO_IDH_MocA_C3"/>
    <property type="match status" value="1"/>
</dbReference>
<dbReference type="SUPFAM" id="SSF55347">
    <property type="entry name" value="Glyceraldehyde-3-phosphate dehydrogenase-like, C-terminal domain"/>
    <property type="match status" value="1"/>
</dbReference>
<dbReference type="SUPFAM" id="SSF51735">
    <property type="entry name" value="NAD(P)-binding Rossmann-fold domains"/>
    <property type="match status" value="1"/>
</dbReference>
<gene>
    <name evidence="3" type="primary">apsD</name>
    <name evidence="6" type="ordered locus">Arad_9238</name>
</gene>
<sequence>MNMTELKGALIGCGFFAVNQMHAWKDVKGAGIAAICDRDPKRLKLVGDQFGIERRYGDAAALFADGGFDFVDIATTVQSHRALVEMAAAHKVPAICQKPFAKSLSDAKAMVRTCENADIPLMVHENFRWQTPIQAVKAVLESGAIGEPFWGRFSFRSGFDVFSGQPYLAEGERFIIEDLGIHTLDIARFILGDVATLTARTKRVNPKIKGEDVATILLDHQNGATSIVDVSYATKLGTEPFPETLIDIDGTQGTIRLSQGYRLEVTGPNGMTISDASPQLLSWASRPWHNIQESVLAIQQHWTDRLSSGGETSTSGADNLKTFALVEAAYESAANGRTVDIGAML</sequence>
<feature type="chain" id="PRO_0000446033" description="D-apiose dehydrogenase">
    <location>
        <begin position="1"/>
        <end position="345"/>
    </location>
</feature>
<feature type="binding site" evidence="2">
    <location>
        <begin position="15"/>
        <end position="16"/>
    </location>
    <ligand>
        <name>NAD(+)</name>
        <dbReference type="ChEBI" id="CHEBI:57540"/>
    </ligand>
</feature>
<feature type="binding site" evidence="2">
    <location>
        <position position="24"/>
    </location>
    <ligand>
        <name>Mg(2+)</name>
        <dbReference type="ChEBI" id="CHEBI:18420"/>
    </ligand>
</feature>
<feature type="binding site" evidence="2">
    <location>
        <position position="25"/>
    </location>
    <ligand>
        <name>Mg(2+)</name>
        <dbReference type="ChEBI" id="CHEBI:18420"/>
    </ligand>
</feature>
<feature type="binding site" evidence="2">
    <location>
        <position position="27"/>
    </location>
    <ligand>
        <name>Mg(2+)</name>
        <dbReference type="ChEBI" id="CHEBI:18420"/>
    </ligand>
</feature>
<feature type="binding site" evidence="2">
    <location>
        <position position="30"/>
    </location>
    <ligand>
        <name>Mg(2+)</name>
        <dbReference type="ChEBI" id="CHEBI:18420"/>
    </ligand>
</feature>
<feature type="binding site" evidence="2">
    <location>
        <position position="37"/>
    </location>
    <ligand>
        <name>NAD(+)</name>
        <dbReference type="ChEBI" id="CHEBI:57540"/>
    </ligand>
</feature>
<feature type="binding site" evidence="2">
    <location>
        <position position="79"/>
    </location>
    <ligand>
        <name>NAD(+)</name>
        <dbReference type="ChEBI" id="CHEBI:57540"/>
    </ligand>
</feature>
<feature type="binding site" evidence="2">
    <location>
        <begin position="97"/>
        <end position="98"/>
    </location>
    <ligand>
        <name>NAD(+)</name>
        <dbReference type="ChEBI" id="CHEBI:57540"/>
    </ligand>
</feature>
<feature type="binding site" evidence="5">
    <location>
        <position position="98"/>
    </location>
    <ligand>
        <name>substrate</name>
    </ligand>
</feature>
<feature type="binding site" evidence="2">
    <location>
        <position position="126"/>
    </location>
    <ligand>
        <name>NAD(+)</name>
        <dbReference type="ChEBI" id="CHEBI:57540"/>
    </ligand>
</feature>
<feature type="binding site" evidence="2">
    <location>
        <begin position="165"/>
        <end position="167"/>
    </location>
    <ligand>
        <name>NAD(+)</name>
        <dbReference type="ChEBI" id="CHEBI:57540"/>
    </ligand>
</feature>
<feature type="binding site" evidence="5">
    <location>
        <position position="165"/>
    </location>
    <ligand>
        <name>substrate</name>
    </ligand>
</feature>
<feature type="binding site" evidence="5">
    <location>
        <position position="178"/>
    </location>
    <ligand>
        <name>substrate</name>
    </ligand>
</feature>
<feature type="binding site" evidence="5">
    <location>
        <position position="182"/>
    </location>
    <ligand>
        <name>substrate</name>
    </ligand>
</feature>
<feature type="binding site" evidence="5">
    <location>
        <position position="232"/>
    </location>
    <ligand>
        <name>substrate</name>
    </ligand>
</feature>
<feature type="strand" evidence="12">
    <location>
        <begin position="6"/>
        <end position="11"/>
    </location>
</feature>
<feature type="helix" evidence="12">
    <location>
        <begin position="17"/>
        <end position="26"/>
    </location>
</feature>
<feature type="strand" evidence="12">
    <location>
        <begin position="30"/>
        <end position="36"/>
    </location>
</feature>
<feature type="helix" evidence="12">
    <location>
        <begin position="40"/>
        <end position="50"/>
    </location>
</feature>
<feature type="strand" evidence="12">
    <location>
        <begin position="54"/>
        <end position="58"/>
    </location>
</feature>
<feature type="helix" evidence="12">
    <location>
        <begin position="59"/>
        <end position="65"/>
    </location>
</feature>
<feature type="strand" evidence="12">
    <location>
        <begin position="69"/>
        <end position="73"/>
    </location>
</feature>
<feature type="helix" evidence="12">
    <location>
        <begin position="77"/>
        <end position="79"/>
    </location>
</feature>
<feature type="helix" evidence="12">
    <location>
        <begin position="80"/>
        <end position="89"/>
    </location>
</feature>
<feature type="strand" evidence="12">
    <location>
        <begin position="94"/>
        <end position="99"/>
    </location>
</feature>
<feature type="helix" evidence="12">
    <location>
        <begin position="104"/>
        <end position="116"/>
    </location>
</feature>
<feature type="strand" evidence="12">
    <location>
        <begin position="121"/>
        <end position="124"/>
    </location>
</feature>
<feature type="helix" evidence="12">
    <location>
        <begin position="127"/>
        <end position="129"/>
    </location>
</feature>
<feature type="helix" evidence="12">
    <location>
        <begin position="131"/>
        <end position="141"/>
    </location>
</feature>
<feature type="turn" evidence="12">
    <location>
        <begin position="142"/>
        <end position="145"/>
    </location>
</feature>
<feature type="strand" evidence="12">
    <location>
        <begin position="147"/>
        <end position="156"/>
    </location>
</feature>
<feature type="turn" evidence="12">
    <location>
        <begin position="161"/>
        <end position="164"/>
    </location>
</feature>
<feature type="helix" evidence="12">
    <location>
        <begin position="166"/>
        <end position="169"/>
    </location>
</feature>
<feature type="helix" evidence="12">
    <location>
        <begin position="175"/>
        <end position="178"/>
    </location>
</feature>
<feature type="helix" evidence="12">
    <location>
        <begin position="180"/>
        <end position="191"/>
    </location>
</feature>
<feature type="strand" evidence="12">
    <location>
        <begin position="194"/>
        <end position="202"/>
    </location>
</feature>
<feature type="strand" evidence="14">
    <location>
        <begin position="208"/>
        <end position="210"/>
    </location>
</feature>
<feature type="strand" evidence="12">
    <location>
        <begin position="213"/>
        <end position="220"/>
    </location>
</feature>
<feature type="strand" evidence="12">
    <location>
        <begin position="225"/>
        <end position="232"/>
    </location>
</feature>
<feature type="strand" evidence="12">
    <location>
        <begin position="245"/>
        <end position="250"/>
    </location>
</feature>
<feature type="strand" evidence="12">
    <location>
        <begin position="253"/>
        <end position="258"/>
    </location>
</feature>
<feature type="turn" evidence="12">
    <location>
        <begin position="259"/>
        <end position="261"/>
    </location>
</feature>
<feature type="strand" evidence="12">
    <location>
        <begin position="262"/>
        <end position="266"/>
    </location>
</feature>
<feature type="strand" evidence="12">
    <location>
        <begin position="271"/>
        <end position="275"/>
    </location>
</feature>
<feature type="turn" evidence="13">
    <location>
        <begin position="286"/>
        <end position="288"/>
    </location>
</feature>
<feature type="helix" evidence="12">
    <location>
        <begin position="289"/>
        <end position="308"/>
    </location>
</feature>
<feature type="helix" evidence="12">
    <location>
        <begin position="316"/>
        <end position="335"/>
    </location>
</feature>
<feature type="strand" evidence="12">
    <location>
        <begin position="339"/>
        <end position="341"/>
    </location>
</feature>
<feature type="helix" evidence="12">
    <location>
        <begin position="342"/>
        <end position="344"/>
    </location>
</feature>